<evidence type="ECO:0000255" key="1">
    <source>
        <dbReference type="HAMAP-Rule" id="MF_01008"/>
    </source>
</evidence>
<evidence type="ECO:0000255" key="2">
    <source>
        <dbReference type="PROSITE-ProRule" id="PRU01076"/>
    </source>
</evidence>
<organism>
    <name type="scientific">Oceanobacillus iheyensis (strain DSM 14371 / CIP 107618 / JCM 11309 / KCTC 3954 / HTE831)</name>
    <dbReference type="NCBI Taxonomy" id="221109"/>
    <lineage>
        <taxon>Bacteria</taxon>
        <taxon>Bacillati</taxon>
        <taxon>Bacillota</taxon>
        <taxon>Bacilli</taxon>
        <taxon>Bacillales</taxon>
        <taxon>Bacillaceae</taxon>
        <taxon>Oceanobacillus</taxon>
    </lineage>
</organism>
<comment type="subunit">
    <text evidence="1">Forms oligomers.</text>
</comment>
<comment type="subcellular location">
    <subcellularLocation>
        <location evidence="1">Cytoplasm</location>
        <location evidence="1">Nucleoid</location>
    </subcellularLocation>
</comment>
<comment type="similarity">
    <text evidence="1">Belongs to the MraZ family.</text>
</comment>
<feature type="chain" id="PRO_0000108517" description="Transcriptional regulator MraZ">
    <location>
        <begin position="1"/>
        <end position="143"/>
    </location>
</feature>
<feature type="domain" description="SpoVT-AbrB 1" evidence="2">
    <location>
        <begin position="5"/>
        <end position="47"/>
    </location>
</feature>
<feature type="domain" description="SpoVT-AbrB 2" evidence="2">
    <location>
        <begin position="76"/>
        <end position="119"/>
    </location>
</feature>
<sequence length="143" mass="16491">MFMGEFLHSIDTKGRIIVPSKFRDNLGSSFVVTRGLDKCLFAYPMDEWKILEEKLKQLPLTKKDARAFTRFFFSGAIECEVDKQGRINIPANLRNYAGLEKDCNVIGVSNRVEFWANDAWEDYVTESEDSFAEIAENLMDFDI</sequence>
<dbReference type="EMBL" id="BA000028">
    <property type="protein sequence ID" value="BAC13417.1"/>
    <property type="molecule type" value="Genomic_DNA"/>
</dbReference>
<dbReference type="RefSeq" id="WP_011065862.1">
    <property type="nucleotide sequence ID" value="NC_004193.1"/>
</dbReference>
<dbReference type="SMR" id="Q8ER54"/>
<dbReference type="STRING" id="221109.gene:10733701"/>
<dbReference type="KEGG" id="oih:OB1461"/>
<dbReference type="eggNOG" id="COG2001">
    <property type="taxonomic scope" value="Bacteria"/>
</dbReference>
<dbReference type="HOGENOM" id="CLU_107907_0_5_9"/>
<dbReference type="OrthoDB" id="9807753at2"/>
<dbReference type="PhylomeDB" id="Q8ER54"/>
<dbReference type="Proteomes" id="UP000000822">
    <property type="component" value="Chromosome"/>
</dbReference>
<dbReference type="GO" id="GO:0005737">
    <property type="term" value="C:cytoplasm"/>
    <property type="evidence" value="ECO:0007669"/>
    <property type="project" value="UniProtKB-UniRule"/>
</dbReference>
<dbReference type="GO" id="GO:0009295">
    <property type="term" value="C:nucleoid"/>
    <property type="evidence" value="ECO:0007669"/>
    <property type="project" value="UniProtKB-SubCell"/>
</dbReference>
<dbReference type="GO" id="GO:0003700">
    <property type="term" value="F:DNA-binding transcription factor activity"/>
    <property type="evidence" value="ECO:0007669"/>
    <property type="project" value="UniProtKB-UniRule"/>
</dbReference>
<dbReference type="GO" id="GO:0000976">
    <property type="term" value="F:transcription cis-regulatory region binding"/>
    <property type="evidence" value="ECO:0007669"/>
    <property type="project" value="TreeGrafter"/>
</dbReference>
<dbReference type="GO" id="GO:2000143">
    <property type="term" value="P:negative regulation of DNA-templated transcription initiation"/>
    <property type="evidence" value="ECO:0007669"/>
    <property type="project" value="TreeGrafter"/>
</dbReference>
<dbReference type="CDD" id="cd16321">
    <property type="entry name" value="MraZ_C"/>
    <property type="match status" value="1"/>
</dbReference>
<dbReference type="CDD" id="cd16320">
    <property type="entry name" value="MraZ_N"/>
    <property type="match status" value="1"/>
</dbReference>
<dbReference type="FunFam" id="3.40.1550.20:FF:000002">
    <property type="entry name" value="Transcriptional regulator MraZ"/>
    <property type="match status" value="1"/>
</dbReference>
<dbReference type="Gene3D" id="3.40.1550.20">
    <property type="entry name" value="Transcriptional regulator MraZ domain"/>
    <property type="match status" value="1"/>
</dbReference>
<dbReference type="HAMAP" id="MF_01008">
    <property type="entry name" value="MraZ"/>
    <property type="match status" value="1"/>
</dbReference>
<dbReference type="InterPro" id="IPR003444">
    <property type="entry name" value="MraZ"/>
</dbReference>
<dbReference type="InterPro" id="IPR035644">
    <property type="entry name" value="MraZ_C"/>
</dbReference>
<dbReference type="InterPro" id="IPR020603">
    <property type="entry name" value="MraZ_dom"/>
</dbReference>
<dbReference type="InterPro" id="IPR035642">
    <property type="entry name" value="MraZ_N"/>
</dbReference>
<dbReference type="InterPro" id="IPR038619">
    <property type="entry name" value="MraZ_sf"/>
</dbReference>
<dbReference type="InterPro" id="IPR007159">
    <property type="entry name" value="SpoVT-AbrB_dom"/>
</dbReference>
<dbReference type="InterPro" id="IPR037914">
    <property type="entry name" value="SpoVT-AbrB_sf"/>
</dbReference>
<dbReference type="NCBIfam" id="TIGR00242">
    <property type="entry name" value="division/cell wall cluster transcriptional repressor MraZ"/>
    <property type="match status" value="1"/>
</dbReference>
<dbReference type="PANTHER" id="PTHR34701">
    <property type="entry name" value="TRANSCRIPTIONAL REGULATOR MRAZ"/>
    <property type="match status" value="1"/>
</dbReference>
<dbReference type="PANTHER" id="PTHR34701:SF1">
    <property type="entry name" value="TRANSCRIPTIONAL REGULATOR MRAZ"/>
    <property type="match status" value="1"/>
</dbReference>
<dbReference type="Pfam" id="PF02381">
    <property type="entry name" value="MraZ"/>
    <property type="match status" value="2"/>
</dbReference>
<dbReference type="SUPFAM" id="SSF89447">
    <property type="entry name" value="AbrB/MazE/MraZ-like"/>
    <property type="match status" value="1"/>
</dbReference>
<dbReference type="PROSITE" id="PS51740">
    <property type="entry name" value="SPOVT_ABRB"/>
    <property type="match status" value="2"/>
</dbReference>
<gene>
    <name evidence="1" type="primary">mraZ</name>
    <name type="ordered locus">OB1461</name>
</gene>
<reference key="1">
    <citation type="journal article" date="2002" name="Nucleic Acids Res.">
        <title>Genome sequence of Oceanobacillus iheyensis isolated from the Iheya Ridge and its unexpected adaptive capabilities to extreme environments.</title>
        <authorList>
            <person name="Takami H."/>
            <person name="Takaki Y."/>
            <person name="Uchiyama I."/>
        </authorList>
    </citation>
    <scope>NUCLEOTIDE SEQUENCE [LARGE SCALE GENOMIC DNA]</scope>
    <source>
        <strain>DSM 14371 / CIP 107618 / JCM 11309 / KCTC 3954 / HTE831</strain>
    </source>
</reference>
<proteinExistence type="inferred from homology"/>
<keyword id="KW-0963">Cytoplasm</keyword>
<keyword id="KW-0238">DNA-binding</keyword>
<keyword id="KW-1185">Reference proteome</keyword>
<keyword id="KW-0677">Repeat</keyword>
<keyword id="KW-0804">Transcription</keyword>
<keyword id="KW-0805">Transcription regulation</keyword>
<protein>
    <recommendedName>
        <fullName>Transcriptional regulator MraZ</fullName>
    </recommendedName>
</protein>
<name>MRAZ_OCEIH</name>
<accession>Q8ER54</accession>